<comment type="similarity">
    <text evidence="1">Belongs to the UPF0246 family.</text>
</comment>
<sequence length="257" mass="28860">MLIVVSPAKTLDYESPVSTSNFTQPELTAHSAELIQVCRTLSSQDVSELMSVSDKIAGLNVARFAQWSETFTLDNARQAIFAFKGDVYTGLEAETLSPQDLDFAQQHLRMLSGLYGVLRPLDLMQPYRLEMGTKLANARGANLYQFWGDIITEKLNQAIEAQGDNVLVNLASNEYFKAVNPKRLNAQIVTPIFKDAKNGQYKIISFFAKKARGMMARYIIENRIKSVKDLEGFNTAGYYFVASESTPTELVFKREEQ</sequence>
<proteinExistence type="inferred from homology"/>
<dbReference type="EMBL" id="CP000627">
    <property type="protein sequence ID" value="ABQ21442.1"/>
    <property type="molecule type" value="Genomic_DNA"/>
</dbReference>
<dbReference type="EMBL" id="CP001235">
    <property type="protein sequence ID" value="ACP10460.1"/>
    <property type="molecule type" value="Genomic_DNA"/>
</dbReference>
<dbReference type="SMR" id="A5F5T1"/>
<dbReference type="KEGG" id="vco:VC0395_A1934"/>
<dbReference type="KEGG" id="vcr:VC395_2470"/>
<dbReference type="PATRIC" id="fig|345073.21.peg.2374"/>
<dbReference type="eggNOG" id="COG3022">
    <property type="taxonomic scope" value="Bacteria"/>
</dbReference>
<dbReference type="HOGENOM" id="CLU_061989_0_0_6"/>
<dbReference type="OrthoDB" id="9777133at2"/>
<dbReference type="Proteomes" id="UP000000249">
    <property type="component" value="Chromosome 2"/>
</dbReference>
<dbReference type="GO" id="GO:0005829">
    <property type="term" value="C:cytosol"/>
    <property type="evidence" value="ECO:0007669"/>
    <property type="project" value="TreeGrafter"/>
</dbReference>
<dbReference type="GO" id="GO:0033194">
    <property type="term" value="P:response to hydroperoxide"/>
    <property type="evidence" value="ECO:0007669"/>
    <property type="project" value="TreeGrafter"/>
</dbReference>
<dbReference type="HAMAP" id="MF_00652">
    <property type="entry name" value="UPF0246"/>
    <property type="match status" value="1"/>
</dbReference>
<dbReference type="InterPro" id="IPR005583">
    <property type="entry name" value="YaaA"/>
</dbReference>
<dbReference type="NCBIfam" id="NF002541">
    <property type="entry name" value="PRK02101.1-1"/>
    <property type="match status" value="1"/>
</dbReference>
<dbReference type="NCBIfam" id="NF002542">
    <property type="entry name" value="PRK02101.1-3"/>
    <property type="match status" value="1"/>
</dbReference>
<dbReference type="PANTHER" id="PTHR30283:SF4">
    <property type="entry name" value="PEROXIDE STRESS RESISTANCE PROTEIN YAAA"/>
    <property type="match status" value="1"/>
</dbReference>
<dbReference type="PANTHER" id="PTHR30283">
    <property type="entry name" value="PEROXIDE STRESS RESPONSE PROTEIN YAAA"/>
    <property type="match status" value="1"/>
</dbReference>
<dbReference type="Pfam" id="PF03883">
    <property type="entry name" value="H2O2_YaaD"/>
    <property type="match status" value="1"/>
</dbReference>
<protein>
    <recommendedName>
        <fullName evidence="1">UPF0246 protein VC0395_A1934/VC395_2470</fullName>
    </recommendedName>
</protein>
<feature type="chain" id="PRO_1000072698" description="UPF0246 protein VC0395_A1934/VC395_2470">
    <location>
        <begin position="1"/>
        <end position="257"/>
    </location>
</feature>
<accession>A5F5T1</accession>
<accession>C3M478</accession>
<evidence type="ECO:0000255" key="1">
    <source>
        <dbReference type="HAMAP-Rule" id="MF_00652"/>
    </source>
</evidence>
<reference key="1">
    <citation type="submission" date="2007-03" db="EMBL/GenBank/DDBJ databases">
        <authorList>
            <person name="Heidelberg J."/>
        </authorList>
    </citation>
    <scope>NUCLEOTIDE SEQUENCE [LARGE SCALE GENOMIC DNA]</scope>
    <source>
        <strain>ATCC 39541 / Classical Ogawa 395 / O395</strain>
    </source>
</reference>
<reference key="2">
    <citation type="journal article" date="2008" name="PLoS ONE">
        <title>A recalibrated molecular clock and independent origins for the cholera pandemic clones.</title>
        <authorList>
            <person name="Feng L."/>
            <person name="Reeves P.R."/>
            <person name="Lan R."/>
            <person name="Ren Y."/>
            <person name="Gao C."/>
            <person name="Zhou Z."/>
            <person name="Ren Y."/>
            <person name="Cheng J."/>
            <person name="Wang W."/>
            <person name="Wang J."/>
            <person name="Qian W."/>
            <person name="Li D."/>
            <person name="Wang L."/>
        </authorList>
    </citation>
    <scope>NUCLEOTIDE SEQUENCE [LARGE SCALE GENOMIC DNA]</scope>
    <source>
        <strain>ATCC 39541 / Classical Ogawa 395 / O395</strain>
    </source>
</reference>
<gene>
    <name type="ordered locus">VC0395_A1934</name>
    <name type="ordered locus">VC395_2470</name>
</gene>
<organism>
    <name type="scientific">Vibrio cholerae serotype O1 (strain ATCC 39541 / Classical Ogawa 395 / O395)</name>
    <dbReference type="NCBI Taxonomy" id="345073"/>
    <lineage>
        <taxon>Bacteria</taxon>
        <taxon>Pseudomonadati</taxon>
        <taxon>Pseudomonadota</taxon>
        <taxon>Gammaproteobacteria</taxon>
        <taxon>Vibrionales</taxon>
        <taxon>Vibrionaceae</taxon>
        <taxon>Vibrio</taxon>
    </lineage>
</organism>
<name>Y3134_VIBC3</name>